<evidence type="ECO:0000250" key="1">
    <source>
        <dbReference type="UniProtKB" id="P01942"/>
    </source>
</evidence>
<evidence type="ECO:0000250" key="2">
    <source>
        <dbReference type="UniProtKB" id="P01946"/>
    </source>
</evidence>
<evidence type="ECO:0000250" key="3">
    <source>
        <dbReference type="UniProtKB" id="P69905"/>
    </source>
</evidence>
<evidence type="ECO:0000255" key="4">
    <source>
        <dbReference type="PROSITE-ProRule" id="PRU00238"/>
    </source>
</evidence>
<accession>P01929</accession>
<organism>
    <name type="scientific">Leontocebus fuscicollis</name>
    <name type="common">Brown-mantled tamarin</name>
    <name type="synonym">Saguinus fuscicollis</name>
    <dbReference type="NCBI Taxonomy" id="9487"/>
    <lineage>
        <taxon>Eukaryota</taxon>
        <taxon>Metazoa</taxon>
        <taxon>Chordata</taxon>
        <taxon>Craniata</taxon>
        <taxon>Vertebrata</taxon>
        <taxon>Euteleostomi</taxon>
        <taxon>Mammalia</taxon>
        <taxon>Eutheria</taxon>
        <taxon>Euarchontoglires</taxon>
        <taxon>Primates</taxon>
        <taxon>Haplorrhini</taxon>
        <taxon>Platyrrhini</taxon>
        <taxon>Cebidae</taxon>
        <taxon>Callitrichinae</taxon>
        <taxon>Leontocebus</taxon>
    </lineage>
</organism>
<comment type="function">
    <text>Involved in oxygen transport from the lung to the various peripheral tissues.</text>
</comment>
<comment type="function">
    <molecule>Hemopressin</molecule>
    <text evidence="2">Hemopressin acts as an antagonist peptide of the cannabinoid receptor CNR1. Hemopressin-binding efficiently blocks cannabinoid receptor CNR1 and subsequent signaling.</text>
</comment>
<comment type="subunit">
    <text>Heterotetramer of two alpha chains and two beta chains.</text>
</comment>
<comment type="tissue specificity">
    <text>Red blood cells.</text>
</comment>
<comment type="similarity">
    <text evidence="4">Belongs to the globin family.</text>
</comment>
<sequence>VLSPADKSNVKAAWGKVGGHAGDYGAEALERMFLSFPTTKTYFPHFDLSHGSAQVKGHGKKVADALTVAVAHVDDMPNALSALSDLHAHKLRVDPVNFKLLSHCLLVTLAAHLPADFTPAVHASLDKFLASVSTVLTSKYR</sequence>
<name>HBA_LEOFU</name>
<protein>
    <recommendedName>
        <fullName>Hemoglobin subunit alpha</fullName>
    </recommendedName>
    <alternativeName>
        <fullName>Alpha-globin</fullName>
    </alternativeName>
    <alternativeName>
        <fullName>Hemoglobin alpha chain</fullName>
    </alternativeName>
    <component>
        <recommendedName>
            <fullName evidence="2">Hemopressin</fullName>
        </recommendedName>
    </component>
</protein>
<reference key="1">
    <citation type="journal article" date="1976" name="Biochem. Genet.">
        <title>Primary structure of the marmoset (Saguinus fusicollis) hemoglobin. I. Use of tryptic maleylated peptides in the solubilization and sequence elucidation of the alpha- and beta-chains.</title>
        <authorList>
            <person name="Lin K.D."/>
            <person name="Kim Y.K."/>
            <person name="Chernoff A.I."/>
        </authorList>
    </citation>
    <scope>PROTEIN SEQUENCE</scope>
</reference>
<gene>
    <name type="primary">HBA</name>
</gene>
<dbReference type="PIR" id="A02255">
    <property type="entry name" value="HAMQF"/>
</dbReference>
<dbReference type="BMRB" id="P01929"/>
<dbReference type="SMR" id="P01929"/>
<dbReference type="GO" id="GO:0072562">
    <property type="term" value="C:blood microparticle"/>
    <property type="evidence" value="ECO:0007669"/>
    <property type="project" value="TreeGrafter"/>
</dbReference>
<dbReference type="GO" id="GO:0031838">
    <property type="term" value="C:haptoglobin-hemoglobin complex"/>
    <property type="evidence" value="ECO:0007669"/>
    <property type="project" value="TreeGrafter"/>
</dbReference>
<dbReference type="GO" id="GO:0005833">
    <property type="term" value="C:hemoglobin complex"/>
    <property type="evidence" value="ECO:0007669"/>
    <property type="project" value="InterPro"/>
</dbReference>
<dbReference type="GO" id="GO:0031720">
    <property type="term" value="F:haptoglobin binding"/>
    <property type="evidence" value="ECO:0007669"/>
    <property type="project" value="TreeGrafter"/>
</dbReference>
<dbReference type="GO" id="GO:0020037">
    <property type="term" value="F:heme binding"/>
    <property type="evidence" value="ECO:0007669"/>
    <property type="project" value="InterPro"/>
</dbReference>
<dbReference type="GO" id="GO:0005506">
    <property type="term" value="F:iron ion binding"/>
    <property type="evidence" value="ECO:0007669"/>
    <property type="project" value="InterPro"/>
</dbReference>
<dbReference type="GO" id="GO:0043177">
    <property type="term" value="F:organic acid binding"/>
    <property type="evidence" value="ECO:0007669"/>
    <property type="project" value="TreeGrafter"/>
</dbReference>
<dbReference type="GO" id="GO:0019825">
    <property type="term" value="F:oxygen binding"/>
    <property type="evidence" value="ECO:0007669"/>
    <property type="project" value="InterPro"/>
</dbReference>
<dbReference type="GO" id="GO:0005344">
    <property type="term" value="F:oxygen carrier activity"/>
    <property type="evidence" value="ECO:0007669"/>
    <property type="project" value="UniProtKB-KW"/>
</dbReference>
<dbReference type="GO" id="GO:0004601">
    <property type="term" value="F:peroxidase activity"/>
    <property type="evidence" value="ECO:0007669"/>
    <property type="project" value="TreeGrafter"/>
</dbReference>
<dbReference type="GO" id="GO:0042744">
    <property type="term" value="P:hydrogen peroxide catabolic process"/>
    <property type="evidence" value="ECO:0007669"/>
    <property type="project" value="TreeGrafter"/>
</dbReference>
<dbReference type="CDD" id="cd08927">
    <property type="entry name" value="Hb-alpha-like"/>
    <property type="match status" value="1"/>
</dbReference>
<dbReference type="FunFam" id="1.10.490.10:FF:000002">
    <property type="entry name" value="Hemoglobin subunit alpha"/>
    <property type="match status" value="1"/>
</dbReference>
<dbReference type="Gene3D" id="1.10.490.10">
    <property type="entry name" value="Globins"/>
    <property type="match status" value="1"/>
</dbReference>
<dbReference type="InterPro" id="IPR000971">
    <property type="entry name" value="Globin"/>
</dbReference>
<dbReference type="InterPro" id="IPR009050">
    <property type="entry name" value="Globin-like_sf"/>
</dbReference>
<dbReference type="InterPro" id="IPR012292">
    <property type="entry name" value="Globin/Proto"/>
</dbReference>
<dbReference type="InterPro" id="IPR002338">
    <property type="entry name" value="Hemoglobin_a-typ"/>
</dbReference>
<dbReference type="InterPro" id="IPR050056">
    <property type="entry name" value="Hemoglobin_oxygen_transport"/>
</dbReference>
<dbReference type="InterPro" id="IPR002339">
    <property type="entry name" value="Hemoglobin_pi"/>
</dbReference>
<dbReference type="PANTHER" id="PTHR11442">
    <property type="entry name" value="HEMOGLOBIN FAMILY MEMBER"/>
    <property type="match status" value="1"/>
</dbReference>
<dbReference type="PANTHER" id="PTHR11442:SF48">
    <property type="entry name" value="HEMOGLOBIN SUBUNIT ALPHA"/>
    <property type="match status" value="1"/>
</dbReference>
<dbReference type="Pfam" id="PF00042">
    <property type="entry name" value="Globin"/>
    <property type="match status" value="1"/>
</dbReference>
<dbReference type="PRINTS" id="PR00612">
    <property type="entry name" value="ALPHAHAEM"/>
</dbReference>
<dbReference type="PRINTS" id="PR00815">
    <property type="entry name" value="PIHAEM"/>
</dbReference>
<dbReference type="SUPFAM" id="SSF46458">
    <property type="entry name" value="Globin-like"/>
    <property type="match status" value="1"/>
</dbReference>
<dbReference type="PROSITE" id="PS01033">
    <property type="entry name" value="GLOBIN"/>
    <property type="match status" value="1"/>
</dbReference>
<feature type="chain" id="PRO_0000052755" description="Hemoglobin subunit alpha">
    <location>
        <begin position="1"/>
        <end position="141"/>
    </location>
</feature>
<feature type="peptide" id="PRO_0000455941" description="Hemopressin" evidence="2">
    <location>
        <begin position="95"/>
        <end position="103"/>
    </location>
</feature>
<feature type="domain" description="Globin" evidence="4">
    <location>
        <begin position="1"/>
        <end position="141"/>
    </location>
</feature>
<feature type="binding site" evidence="4">
    <location>
        <position position="58"/>
    </location>
    <ligand>
        <name>O2</name>
        <dbReference type="ChEBI" id="CHEBI:15379"/>
    </ligand>
</feature>
<feature type="binding site" description="proximal binding residue" evidence="4">
    <location>
        <position position="87"/>
    </location>
    <ligand>
        <name>heme b</name>
        <dbReference type="ChEBI" id="CHEBI:60344"/>
    </ligand>
    <ligandPart>
        <name>Fe</name>
        <dbReference type="ChEBI" id="CHEBI:18248"/>
    </ligandPart>
</feature>
<feature type="modified residue" description="Phosphoserine" evidence="3">
    <location>
        <position position="3"/>
    </location>
</feature>
<feature type="modified residue" description="N6-succinyllysine" evidence="1">
    <location>
        <position position="7"/>
    </location>
</feature>
<feature type="modified residue" description="N6-succinyllysine" evidence="1">
    <location>
        <position position="11"/>
    </location>
</feature>
<feature type="modified residue" description="N6-acetyllysine; alternate" evidence="3">
    <location>
        <position position="16"/>
    </location>
</feature>
<feature type="modified residue" description="N6-succinyllysine; alternate" evidence="1">
    <location>
        <position position="16"/>
    </location>
</feature>
<feature type="modified residue" description="Phosphotyrosine" evidence="3">
    <location>
        <position position="24"/>
    </location>
</feature>
<feature type="modified residue" description="Phosphoserine" evidence="3">
    <location>
        <position position="35"/>
    </location>
</feature>
<feature type="modified residue" description="N6-succinyllysine" evidence="1">
    <location>
        <position position="40"/>
    </location>
</feature>
<feature type="modified residue" description="Phosphoserine" evidence="3">
    <location>
        <position position="49"/>
    </location>
</feature>
<feature type="modified residue" description="Phosphoserine" evidence="1">
    <location>
        <position position="102"/>
    </location>
</feature>
<feature type="modified residue" description="Phosphothreonine" evidence="1">
    <location>
        <position position="108"/>
    </location>
</feature>
<feature type="modified residue" description="Phosphoserine" evidence="1">
    <location>
        <position position="124"/>
    </location>
</feature>
<feature type="modified residue" description="Phosphoserine" evidence="1">
    <location>
        <position position="131"/>
    </location>
</feature>
<feature type="modified residue" description="Phosphothreonine" evidence="1">
    <location>
        <position position="134"/>
    </location>
</feature>
<feature type="modified residue" description="Phosphothreonine" evidence="1">
    <location>
        <position position="137"/>
    </location>
</feature>
<feature type="modified residue" description="Phosphoserine" evidence="1">
    <location>
        <position position="138"/>
    </location>
</feature>
<keyword id="KW-0007">Acetylation</keyword>
<keyword id="KW-0903">Direct protein sequencing</keyword>
<keyword id="KW-0349">Heme</keyword>
<keyword id="KW-0408">Iron</keyword>
<keyword id="KW-0479">Metal-binding</keyword>
<keyword id="KW-0561">Oxygen transport</keyword>
<keyword id="KW-0597">Phosphoprotein</keyword>
<keyword id="KW-0813">Transport</keyword>
<proteinExistence type="evidence at protein level"/>